<proteinExistence type="inferred from homology"/>
<name>UVRC_UREP2</name>
<accession>B1AJ20</accession>
<comment type="function">
    <text evidence="1">The UvrABC repair system catalyzes the recognition and processing of DNA lesions. UvrC both incises the 5' and 3' sides of the lesion. The N-terminal half is responsible for the 3' incision and the C-terminal half is responsible for the 5' incision.</text>
</comment>
<comment type="subunit">
    <text evidence="1">Interacts with UvrB in an incision complex.</text>
</comment>
<comment type="subcellular location">
    <subcellularLocation>
        <location evidence="1">Cytoplasm</location>
    </subcellularLocation>
</comment>
<comment type="similarity">
    <text evidence="1">Belongs to the UvrC family.</text>
</comment>
<sequence>MNDLLKNKLKLIPHKPGCYLWKDQFNQIIYIGKAKDLYNRTHSYFNGCKDNKTSKLVNNINDLEYIVVNNVNEALILENNLIKTHLPKYNILLKDGSNYPYIMITNEQYPRLKYVRTYDKNKGIYFGPLADSTNKYQLFNLLNSIFPFNKCNHQPYKKCIYYDLHQCINQVQQSTYQEAISEVKEIFKGNLDHILMILQTKEQHAVTKLDFENAQKYAEQQKALTSIINSGLVQLDNNESFDIIGFYEKNNYLVIIIFNYVKGKLLNKSADTFAIYDYEINELITSFLMQYYSQNKISSKIIVSLDDDNLLALSQRFHTKFINAQTKFHKRILKLALDNAILYFESNIKNVINKQNELDDALNQLKQILKLPDLNIIECFDNSNINLSLPIAGMIVYQNGKLNNKLNRKYNLMTTKNASDYHFMIEVITRRYQRLVSQHQKLPNLIVVDGGKLQVNAALYALAQLQINIPLIGLKKDQKHKTDAIVLTNGDEIVLDRKSILYKFLANMQNDVHNYAISFLRDKHTKSIFNSLLDNVQGLGKKRFNELLKYYDSINDLKSASDQELLQFLPKNVLVNLREKLNKI</sequence>
<feature type="chain" id="PRO_1000077856" description="UvrABC system protein C">
    <location>
        <begin position="1"/>
        <end position="584"/>
    </location>
</feature>
<feature type="domain" description="GIY-YIG" evidence="1">
    <location>
        <begin position="14"/>
        <end position="91"/>
    </location>
</feature>
<feature type="domain" description="UVR" evidence="1">
    <location>
        <begin position="192"/>
        <end position="227"/>
    </location>
</feature>
<reference key="1">
    <citation type="submission" date="2008-02" db="EMBL/GenBank/DDBJ databases">
        <title>Genome sequence of Ureaplasma parvum serovar 3.</title>
        <authorList>
            <person name="Methe B.A."/>
            <person name="Glass J."/>
            <person name="Waites K."/>
            <person name="Shrivastava S."/>
        </authorList>
    </citation>
    <scope>NUCLEOTIDE SEQUENCE [LARGE SCALE GENOMIC DNA]</scope>
    <source>
        <strain>ATCC 27815 / 27 / NCTC 11736</strain>
    </source>
</reference>
<organism>
    <name type="scientific">Ureaplasma parvum serovar 3 (strain ATCC 27815 / 27 / NCTC 11736)</name>
    <dbReference type="NCBI Taxonomy" id="505682"/>
    <lineage>
        <taxon>Bacteria</taxon>
        <taxon>Bacillati</taxon>
        <taxon>Mycoplasmatota</taxon>
        <taxon>Mycoplasmoidales</taxon>
        <taxon>Mycoplasmoidaceae</taxon>
        <taxon>Ureaplasma</taxon>
    </lineage>
</organism>
<evidence type="ECO:0000255" key="1">
    <source>
        <dbReference type="HAMAP-Rule" id="MF_00203"/>
    </source>
</evidence>
<keyword id="KW-0963">Cytoplasm</keyword>
<keyword id="KW-0227">DNA damage</keyword>
<keyword id="KW-0228">DNA excision</keyword>
<keyword id="KW-0234">DNA repair</keyword>
<keyword id="KW-0267">Excision nuclease</keyword>
<keyword id="KW-0742">SOS response</keyword>
<dbReference type="EMBL" id="CP000942">
    <property type="protein sequence ID" value="ACA33057.1"/>
    <property type="molecule type" value="Genomic_DNA"/>
</dbReference>
<dbReference type="RefSeq" id="WP_010891756.1">
    <property type="nucleotide sequence ID" value="NC_010503.1"/>
</dbReference>
<dbReference type="SMR" id="B1AJ20"/>
<dbReference type="GeneID" id="29672651"/>
<dbReference type="KEGG" id="upa:UPA3_0397"/>
<dbReference type="HOGENOM" id="CLU_014841_3_2_14"/>
<dbReference type="Proteomes" id="UP000002162">
    <property type="component" value="Chromosome"/>
</dbReference>
<dbReference type="GO" id="GO:0005737">
    <property type="term" value="C:cytoplasm"/>
    <property type="evidence" value="ECO:0007669"/>
    <property type="project" value="UniProtKB-SubCell"/>
</dbReference>
<dbReference type="GO" id="GO:0009380">
    <property type="term" value="C:excinuclease repair complex"/>
    <property type="evidence" value="ECO:0007669"/>
    <property type="project" value="InterPro"/>
</dbReference>
<dbReference type="GO" id="GO:0003677">
    <property type="term" value="F:DNA binding"/>
    <property type="evidence" value="ECO:0007669"/>
    <property type="project" value="UniProtKB-UniRule"/>
</dbReference>
<dbReference type="GO" id="GO:0009381">
    <property type="term" value="F:excinuclease ABC activity"/>
    <property type="evidence" value="ECO:0007669"/>
    <property type="project" value="UniProtKB-UniRule"/>
</dbReference>
<dbReference type="GO" id="GO:0006289">
    <property type="term" value="P:nucleotide-excision repair"/>
    <property type="evidence" value="ECO:0007669"/>
    <property type="project" value="UniProtKB-UniRule"/>
</dbReference>
<dbReference type="GO" id="GO:0009432">
    <property type="term" value="P:SOS response"/>
    <property type="evidence" value="ECO:0007669"/>
    <property type="project" value="UniProtKB-UniRule"/>
</dbReference>
<dbReference type="CDD" id="cd10434">
    <property type="entry name" value="GIY-YIG_UvrC_Cho"/>
    <property type="match status" value="1"/>
</dbReference>
<dbReference type="FunFam" id="3.40.1440.10:FF:000001">
    <property type="entry name" value="UvrABC system protein C"/>
    <property type="match status" value="1"/>
</dbReference>
<dbReference type="Gene3D" id="1.10.150.20">
    <property type="entry name" value="5' to 3' exonuclease, C-terminal subdomain"/>
    <property type="match status" value="1"/>
</dbReference>
<dbReference type="Gene3D" id="3.40.1440.10">
    <property type="entry name" value="GIY-YIG endonuclease"/>
    <property type="match status" value="1"/>
</dbReference>
<dbReference type="Gene3D" id="3.30.420.340">
    <property type="entry name" value="UvrC, RNAse H endonuclease domain"/>
    <property type="match status" value="1"/>
</dbReference>
<dbReference type="HAMAP" id="MF_00203">
    <property type="entry name" value="UvrC"/>
    <property type="match status" value="1"/>
</dbReference>
<dbReference type="InterPro" id="IPR013320">
    <property type="entry name" value="ConA-like_dom_sf"/>
</dbReference>
<dbReference type="InterPro" id="IPR000305">
    <property type="entry name" value="GIY-YIG_endonuc"/>
</dbReference>
<dbReference type="InterPro" id="IPR035901">
    <property type="entry name" value="GIY-YIG_endonuc_sf"/>
</dbReference>
<dbReference type="InterPro" id="IPR047296">
    <property type="entry name" value="GIY-YIG_UvrC_Cho"/>
</dbReference>
<dbReference type="InterPro" id="IPR010994">
    <property type="entry name" value="RuvA_2-like"/>
</dbReference>
<dbReference type="InterPro" id="IPR050066">
    <property type="entry name" value="UvrABC_protein_C"/>
</dbReference>
<dbReference type="InterPro" id="IPR004791">
    <property type="entry name" value="UvrC"/>
</dbReference>
<dbReference type="InterPro" id="IPR001162">
    <property type="entry name" value="UvrC_RNase_H_dom"/>
</dbReference>
<dbReference type="InterPro" id="IPR038476">
    <property type="entry name" value="UvrC_RNase_H_dom_sf"/>
</dbReference>
<dbReference type="NCBIfam" id="TIGR00194">
    <property type="entry name" value="uvrC"/>
    <property type="match status" value="1"/>
</dbReference>
<dbReference type="PANTHER" id="PTHR30562:SF1">
    <property type="entry name" value="UVRABC SYSTEM PROTEIN C"/>
    <property type="match status" value="1"/>
</dbReference>
<dbReference type="PANTHER" id="PTHR30562">
    <property type="entry name" value="UVRC/OXIDOREDUCTASE"/>
    <property type="match status" value="1"/>
</dbReference>
<dbReference type="Pfam" id="PF01541">
    <property type="entry name" value="GIY-YIG"/>
    <property type="match status" value="1"/>
</dbReference>
<dbReference type="Pfam" id="PF22920">
    <property type="entry name" value="UvrC_RNaseH"/>
    <property type="match status" value="1"/>
</dbReference>
<dbReference type="Pfam" id="PF08459">
    <property type="entry name" value="UvrC_RNaseH_dom"/>
    <property type="match status" value="1"/>
</dbReference>
<dbReference type="SMART" id="SM00465">
    <property type="entry name" value="GIYc"/>
    <property type="match status" value="1"/>
</dbReference>
<dbReference type="SUPFAM" id="SSF49899">
    <property type="entry name" value="Concanavalin A-like lectins/glucanases"/>
    <property type="match status" value="1"/>
</dbReference>
<dbReference type="SUPFAM" id="SSF82771">
    <property type="entry name" value="GIY-YIG endonuclease"/>
    <property type="match status" value="1"/>
</dbReference>
<dbReference type="SUPFAM" id="SSF47781">
    <property type="entry name" value="RuvA domain 2-like"/>
    <property type="match status" value="1"/>
</dbReference>
<dbReference type="PROSITE" id="PS50164">
    <property type="entry name" value="GIY_YIG"/>
    <property type="match status" value="1"/>
</dbReference>
<dbReference type="PROSITE" id="PS50165">
    <property type="entry name" value="UVRC"/>
    <property type="match status" value="1"/>
</dbReference>
<gene>
    <name evidence="1" type="primary">uvrC</name>
    <name type="ordered locus">UPA3_0397</name>
</gene>
<protein>
    <recommendedName>
        <fullName evidence="1">UvrABC system protein C</fullName>
        <shortName evidence="1">Protein UvrC</shortName>
    </recommendedName>
    <alternativeName>
        <fullName evidence="1">Excinuclease ABC subunit C</fullName>
    </alternativeName>
</protein>